<protein>
    <recommendedName>
        <fullName evidence="1">UDP-N-acetylmuramate--L-alanine ligase</fullName>
        <ecNumber evidence="1">6.3.2.8</ecNumber>
    </recommendedName>
    <alternativeName>
        <fullName evidence="1">UDP-N-acetylmuramoyl-L-alanine synthetase</fullName>
    </alternativeName>
</protein>
<reference key="1">
    <citation type="submission" date="2005-09" db="EMBL/GenBank/DDBJ databases">
        <title>Complete genome sequence of Clostridium kluyveri and comparative genomics of Clostridia species.</title>
        <authorList>
            <person name="Inui M."/>
            <person name="Nonaka H."/>
            <person name="Shinoda Y."/>
            <person name="Ikenaga Y."/>
            <person name="Abe M."/>
            <person name="Naito K."/>
            <person name="Vertes A.A."/>
            <person name="Yukawa H."/>
        </authorList>
    </citation>
    <scope>NUCLEOTIDE SEQUENCE [LARGE SCALE GENOMIC DNA]</scope>
    <source>
        <strain>NBRC 12016</strain>
    </source>
</reference>
<dbReference type="EC" id="6.3.2.8" evidence="1"/>
<dbReference type="EMBL" id="AP009049">
    <property type="protein sequence ID" value="BAH05169.1"/>
    <property type="molecule type" value="Genomic_DNA"/>
</dbReference>
<dbReference type="RefSeq" id="WP_011988739.1">
    <property type="nucleotide sequence ID" value="NC_011837.1"/>
</dbReference>
<dbReference type="SMR" id="B9DY44"/>
<dbReference type="KEGG" id="ckr:CKR_0118"/>
<dbReference type="HOGENOM" id="CLU_028104_1_0_9"/>
<dbReference type="UniPathway" id="UPA00219"/>
<dbReference type="Proteomes" id="UP000007969">
    <property type="component" value="Chromosome"/>
</dbReference>
<dbReference type="GO" id="GO:0005737">
    <property type="term" value="C:cytoplasm"/>
    <property type="evidence" value="ECO:0007669"/>
    <property type="project" value="UniProtKB-SubCell"/>
</dbReference>
<dbReference type="GO" id="GO:0005524">
    <property type="term" value="F:ATP binding"/>
    <property type="evidence" value="ECO:0007669"/>
    <property type="project" value="UniProtKB-UniRule"/>
</dbReference>
<dbReference type="GO" id="GO:0008763">
    <property type="term" value="F:UDP-N-acetylmuramate-L-alanine ligase activity"/>
    <property type="evidence" value="ECO:0007669"/>
    <property type="project" value="UniProtKB-UniRule"/>
</dbReference>
<dbReference type="GO" id="GO:0051301">
    <property type="term" value="P:cell division"/>
    <property type="evidence" value="ECO:0007669"/>
    <property type="project" value="UniProtKB-KW"/>
</dbReference>
<dbReference type="GO" id="GO:0071555">
    <property type="term" value="P:cell wall organization"/>
    <property type="evidence" value="ECO:0007669"/>
    <property type="project" value="UniProtKB-KW"/>
</dbReference>
<dbReference type="GO" id="GO:0009252">
    <property type="term" value="P:peptidoglycan biosynthetic process"/>
    <property type="evidence" value="ECO:0007669"/>
    <property type="project" value="UniProtKB-UniRule"/>
</dbReference>
<dbReference type="GO" id="GO:0008360">
    <property type="term" value="P:regulation of cell shape"/>
    <property type="evidence" value="ECO:0007669"/>
    <property type="project" value="UniProtKB-KW"/>
</dbReference>
<dbReference type="Gene3D" id="3.90.190.20">
    <property type="entry name" value="Mur ligase, C-terminal domain"/>
    <property type="match status" value="1"/>
</dbReference>
<dbReference type="Gene3D" id="3.40.1190.10">
    <property type="entry name" value="Mur-like, catalytic domain"/>
    <property type="match status" value="1"/>
</dbReference>
<dbReference type="Gene3D" id="3.40.50.720">
    <property type="entry name" value="NAD(P)-binding Rossmann-like Domain"/>
    <property type="match status" value="1"/>
</dbReference>
<dbReference type="HAMAP" id="MF_00046">
    <property type="entry name" value="MurC"/>
    <property type="match status" value="1"/>
</dbReference>
<dbReference type="InterPro" id="IPR036565">
    <property type="entry name" value="Mur-like_cat_sf"/>
</dbReference>
<dbReference type="InterPro" id="IPR004101">
    <property type="entry name" value="Mur_ligase_C"/>
</dbReference>
<dbReference type="InterPro" id="IPR036615">
    <property type="entry name" value="Mur_ligase_C_dom_sf"/>
</dbReference>
<dbReference type="InterPro" id="IPR013221">
    <property type="entry name" value="Mur_ligase_cen"/>
</dbReference>
<dbReference type="InterPro" id="IPR000713">
    <property type="entry name" value="Mur_ligase_N"/>
</dbReference>
<dbReference type="InterPro" id="IPR050061">
    <property type="entry name" value="MurCDEF_pg_biosynth"/>
</dbReference>
<dbReference type="InterPro" id="IPR005758">
    <property type="entry name" value="UDP-N-AcMur_Ala_ligase_MurC"/>
</dbReference>
<dbReference type="NCBIfam" id="TIGR01082">
    <property type="entry name" value="murC"/>
    <property type="match status" value="1"/>
</dbReference>
<dbReference type="PANTHER" id="PTHR43445:SF3">
    <property type="entry name" value="UDP-N-ACETYLMURAMATE--L-ALANINE LIGASE"/>
    <property type="match status" value="1"/>
</dbReference>
<dbReference type="PANTHER" id="PTHR43445">
    <property type="entry name" value="UDP-N-ACETYLMURAMATE--L-ALANINE LIGASE-RELATED"/>
    <property type="match status" value="1"/>
</dbReference>
<dbReference type="Pfam" id="PF01225">
    <property type="entry name" value="Mur_ligase"/>
    <property type="match status" value="1"/>
</dbReference>
<dbReference type="Pfam" id="PF02875">
    <property type="entry name" value="Mur_ligase_C"/>
    <property type="match status" value="1"/>
</dbReference>
<dbReference type="Pfam" id="PF08245">
    <property type="entry name" value="Mur_ligase_M"/>
    <property type="match status" value="1"/>
</dbReference>
<dbReference type="SUPFAM" id="SSF51984">
    <property type="entry name" value="MurCD N-terminal domain"/>
    <property type="match status" value="1"/>
</dbReference>
<dbReference type="SUPFAM" id="SSF53623">
    <property type="entry name" value="MurD-like peptide ligases, catalytic domain"/>
    <property type="match status" value="1"/>
</dbReference>
<dbReference type="SUPFAM" id="SSF53244">
    <property type="entry name" value="MurD-like peptide ligases, peptide-binding domain"/>
    <property type="match status" value="1"/>
</dbReference>
<name>MURC_CLOK1</name>
<sequence length="457" mass="50876">MSFDFIKNKKVHFIGIGGISMSALAEILLEKGFKVSGSDVKSSEATERLELKGAKVYIGQISQNITSDIDLVVYTAAISKNNEELLKAKDLNIPLMDRAEFLGEIMKGHKYNIAVSGTHGKTTTTSMLSSITLEANLDPTILVGGNLDIIGGNVRIGNSPFFITEACEYKESFLKFFPFIGIILNIDADHLDYYKDIEEIQNAFIKFGKLIPKEGYLVCCADDRRMEKIISNVNCNVMSYGIETGDITAKNICFDKEGRAFFEVYKSDKKLFSLNLSVPGEHNILNALASISVSLILNISVDNIINGLKSFKGTHRRFEIKGQRKGVVVIDDYAHHPTEIKATLNAAKNYPHKRIICVFQPHTFSRTISLFKEFTAAFDNVDELILSDIFPAREKDTGEISSSMLCEQIIKRGVKCRNIKDFDSIVQYLNNILTEGDVLLTIGAGDVFQVGELYLNQ</sequence>
<comment type="function">
    <text evidence="1">Cell wall formation.</text>
</comment>
<comment type="catalytic activity">
    <reaction evidence="1">
        <text>UDP-N-acetyl-alpha-D-muramate + L-alanine + ATP = UDP-N-acetyl-alpha-D-muramoyl-L-alanine + ADP + phosphate + H(+)</text>
        <dbReference type="Rhea" id="RHEA:23372"/>
        <dbReference type="ChEBI" id="CHEBI:15378"/>
        <dbReference type="ChEBI" id="CHEBI:30616"/>
        <dbReference type="ChEBI" id="CHEBI:43474"/>
        <dbReference type="ChEBI" id="CHEBI:57972"/>
        <dbReference type="ChEBI" id="CHEBI:70757"/>
        <dbReference type="ChEBI" id="CHEBI:83898"/>
        <dbReference type="ChEBI" id="CHEBI:456216"/>
        <dbReference type="EC" id="6.3.2.8"/>
    </reaction>
</comment>
<comment type="pathway">
    <text evidence="1">Cell wall biogenesis; peptidoglycan biosynthesis.</text>
</comment>
<comment type="subcellular location">
    <subcellularLocation>
        <location evidence="1">Cytoplasm</location>
    </subcellularLocation>
</comment>
<comment type="similarity">
    <text evidence="1">Belongs to the MurCDEF family.</text>
</comment>
<proteinExistence type="inferred from homology"/>
<organism>
    <name type="scientific">Clostridium kluyveri (strain NBRC 12016)</name>
    <dbReference type="NCBI Taxonomy" id="583346"/>
    <lineage>
        <taxon>Bacteria</taxon>
        <taxon>Bacillati</taxon>
        <taxon>Bacillota</taxon>
        <taxon>Clostridia</taxon>
        <taxon>Eubacteriales</taxon>
        <taxon>Clostridiaceae</taxon>
        <taxon>Clostridium</taxon>
    </lineage>
</organism>
<accession>B9DY44</accession>
<keyword id="KW-0067">ATP-binding</keyword>
<keyword id="KW-0131">Cell cycle</keyword>
<keyword id="KW-0132">Cell division</keyword>
<keyword id="KW-0133">Cell shape</keyword>
<keyword id="KW-0961">Cell wall biogenesis/degradation</keyword>
<keyword id="KW-0963">Cytoplasm</keyword>
<keyword id="KW-0436">Ligase</keyword>
<keyword id="KW-0547">Nucleotide-binding</keyword>
<keyword id="KW-0573">Peptidoglycan synthesis</keyword>
<evidence type="ECO:0000255" key="1">
    <source>
        <dbReference type="HAMAP-Rule" id="MF_00046"/>
    </source>
</evidence>
<gene>
    <name evidence="1" type="primary">murC</name>
    <name type="ordered locus">CKR_0118</name>
</gene>
<feature type="chain" id="PRO_1000117402" description="UDP-N-acetylmuramate--L-alanine ligase">
    <location>
        <begin position="1"/>
        <end position="457"/>
    </location>
</feature>
<feature type="binding site" evidence="1">
    <location>
        <begin position="117"/>
        <end position="123"/>
    </location>
    <ligand>
        <name>ATP</name>
        <dbReference type="ChEBI" id="CHEBI:30616"/>
    </ligand>
</feature>